<dbReference type="EC" id="4.1.1.39"/>
<dbReference type="EMBL" id="X69739">
    <property type="protein sequence ID" value="CAA49394.1"/>
    <property type="molecule type" value="Genomic_DNA"/>
</dbReference>
<dbReference type="PIR" id="S31552">
    <property type="entry name" value="S31552"/>
</dbReference>
<dbReference type="SMR" id="P31188"/>
<dbReference type="GO" id="GO:0009507">
    <property type="term" value="C:chloroplast"/>
    <property type="evidence" value="ECO:0007669"/>
    <property type="project" value="UniProtKB-SubCell"/>
</dbReference>
<dbReference type="GO" id="GO:0004497">
    <property type="term" value="F:monooxygenase activity"/>
    <property type="evidence" value="ECO:0007669"/>
    <property type="project" value="UniProtKB-KW"/>
</dbReference>
<dbReference type="GO" id="GO:0016984">
    <property type="term" value="F:ribulose-bisphosphate carboxylase activity"/>
    <property type="evidence" value="ECO:0007669"/>
    <property type="project" value="UniProtKB-EC"/>
</dbReference>
<dbReference type="GO" id="GO:0009853">
    <property type="term" value="P:photorespiration"/>
    <property type="evidence" value="ECO:0007669"/>
    <property type="project" value="UniProtKB-KW"/>
</dbReference>
<dbReference type="GO" id="GO:0019253">
    <property type="term" value="P:reductive pentose-phosphate cycle"/>
    <property type="evidence" value="ECO:0007669"/>
    <property type="project" value="UniProtKB-KW"/>
</dbReference>
<dbReference type="Gene3D" id="3.30.70.150">
    <property type="entry name" value="RuBisCO large subunit, N-terminal domain"/>
    <property type="match status" value="1"/>
</dbReference>
<dbReference type="InterPro" id="IPR033966">
    <property type="entry name" value="RuBisCO"/>
</dbReference>
<dbReference type="InterPro" id="IPR017443">
    <property type="entry name" value="RuBisCO_lsu_fd_N"/>
</dbReference>
<dbReference type="InterPro" id="IPR036422">
    <property type="entry name" value="RuBisCO_lsu_N_sf"/>
</dbReference>
<dbReference type="PANTHER" id="PTHR42704">
    <property type="entry name" value="RIBULOSE BISPHOSPHATE CARBOXYLASE"/>
    <property type="match status" value="1"/>
</dbReference>
<dbReference type="PANTHER" id="PTHR42704:SF16">
    <property type="entry name" value="RIBULOSE BISPHOSPHATE CARBOXYLASE LARGE CHAIN"/>
    <property type="match status" value="1"/>
</dbReference>
<dbReference type="Pfam" id="PF02788">
    <property type="entry name" value="RuBisCO_large_N"/>
    <property type="match status" value="1"/>
</dbReference>
<dbReference type="SUPFAM" id="SSF54966">
    <property type="entry name" value="RuBisCO, large subunit, small (N-terminal) domain"/>
    <property type="match status" value="1"/>
</dbReference>
<gene>
    <name type="primary">rbcL</name>
</gene>
<proteinExistence type="inferred from homology"/>
<keyword id="KW-0007">Acetylation</keyword>
<keyword id="KW-0113">Calvin cycle</keyword>
<keyword id="KW-0120">Carbon dioxide fixation</keyword>
<keyword id="KW-0150">Chloroplast</keyword>
<keyword id="KW-0456">Lyase</keyword>
<keyword id="KW-0488">Methylation</keyword>
<keyword id="KW-0503">Monooxygenase</keyword>
<keyword id="KW-0560">Oxidoreductase</keyword>
<keyword id="KW-0601">Photorespiration</keyword>
<keyword id="KW-0602">Photosynthesis</keyword>
<keyword id="KW-0934">Plastid</keyword>
<feature type="propeptide" id="PRO_0000031243" evidence="1">
    <location>
        <begin position="1"/>
        <end position="2"/>
    </location>
</feature>
<feature type="chain" id="PRO_0000031244" description="Ribulose bisphosphate carboxylase large chain">
    <location>
        <begin position="3"/>
        <end position="54" status="greater than"/>
    </location>
</feature>
<feature type="modified residue" description="N-acetylproline" evidence="1">
    <location>
        <position position="3"/>
    </location>
</feature>
<feature type="modified residue" description="N6,N6,N6-trimethyllysine" evidence="1">
    <location>
        <position position="14"/>
    </location>
</feature>
<feature type="non-terminal residue">
    <location>
        <position position="54"/>
    </location>
</feature>
<comment type="function">
    <text evidence="1">RuBisCO catalyzes two reactions: the carboxylation of D-ribulose 1,5-bisphosphate, the primary event in carbon dioxide fixation, as well as the oxidative fragmentation of the pentose substrate in the photorespiration process. Both reactions occur simultaneously and in competition at the same active site (By similarity).</text>
</comment>
<comment type="catalytic activity">
    <reaction>
        <text>2 (2R)-3-phosphoglycerate + 2 H(+) = D-ribulose 1,5-bisphosphate + CO2 + H2O</text>
        <dbReference type="Rhea" id="RHEA:23124"/>
        <dbReference type="ChEBI" id="CHEBI:15377"/>
        <dbReference type="ChEBI" id="CHEBI:15378"/>
        <dbReference type="ChEBI" id="CHEBI:16526"/>
        <dbReference type="ChEBI" id="CHEBI:57870"/>
        <dbReference type="ChEBI" id="CHEBI:58272"/>
        <dbReference type="EC" id="4.1.1.39"/>
    </reaction>
</comment>
<comment type="catalytic activity">
    <reaction>
        <text>D-ribulose 1,5-bisphosphate + O2 = 2-phosphoglycolate + (2R)-3-phosphoglycerate + 2 H(+)</text>
        <dbReference type="Rhea" id="RHEA:36631"/>
        <dbReference type="ChEBI" id="CHEBI:15378"/>
        <dbReference type="ChEBI" id="CHEBI:15379"/>
        <dbReference type="ChEBI" id="CHEBI:57870"/>
        <dbReference type="ChEBI" id="CHEBI:58033"/>
        <dbReference type="ChEBI" id="CHEBI:58272"/>
    </reaction>
</comment>
<comment type="subunit">
    <text evidence="1">Heterohexadecamer of 8 large chains and 8 small chains.</text>
</comment>
<comment type="subcellular location">
    <subcellularLocation>
        <location>Plastid</location>
        <location>Chloroplast</location>
    </subcellularLocation>
</comment>
<comment type="miscellaneous">
    <text evidence="1">The basic functional RuBisCO is composed of a large chain homodimer in a 'head-to-tail' conformation. In form I RuBisCO this homodimer is arranged in a barrel-like tetramer with the small subunits forming a tetrameric 'cap' on each end of the 'barrel' (By similarity).</text>
</comment>
<comment type="similarity">
    <text evidence="2">Belongs to the RuBisCO large chain family. Type I subfamily.</text>
</comment>
<geneLocation type="chloroplast"/>
<protein>
    <recommendedName>
        <fullName>Ribulose bisphosphate carboxylase large chain</fullName>
        <shortName>RuBisCO large subunit</shortName>
        <ecNumber>4.1.1.39</ecNumber>
    </recommendedName>
</protein>
<accession>P31188</accession>
<sequence length="54" mass="5925">MSPQTETKASVGFKAGVKEYKLTYYTPDYETKDTDILAAFRVTPQPGVPPEEAG</sequence>
<reference key="1">
    <citation type="journal article" date="1994" name="Mol. Phylogenet. Evol.">
        <title>Molecular phylogeny of families related to Celastrales based on rbcL 5' flanking sequences.</title>
        <authorList>
            <person name="Savolainen V."/>
            <person name="Manen J.F."/>
            <person name="Douzery E.J.P."/>
            <person name="Spichiger R."/>
        </authorList>
    </citation>
    <scope>NUCLEOTIDE SEQUENCE [GENOMIC DNA]</scope>
    <source>
        <strain>Sample GBO7</strain>
    </source>
</reference>
<organism>
    <name type="scientific">Geum borisii</name>
    <name type="common">Avens</name>
    <name type="synonym">Geum bulgaricum x Geum reptans</name>
    <dbReference type="NCBI Taxonomy" id="3763"/>
    <lineage>
        <taxon>Eukaryota</taxon>
        <taxon>Viridiplantae</taxon>
        <taxon>Streptophyta</taxon>
        <taxon>Embryophyta</taxon>
        <taxon>Tracheophyta</taxon>
        <taxon>Spermatophyta</taxon>
        <taxon>Magnoliopsida</taxon>
        <taxon>eudicotyledons</taxon>
        <taxon>Gunneridae</taxon>
        <taxon>Pentapetalae</taxon>
        <taxon>rosids</taxon>
        <taxon>fabids</taxon>
        <taxon>Rosales</taxon>
        <taxon>Rosaceae</taxon>
        <taxon>Rosoideae</taxon>
        <taxon>Colurieae</taxon>
        <taxon>Geum</taxon>
    </lineage>
</organism>
<evidence type="ECO:0000250" key="1"/>
<evidence type="ECO:0000305" key="2"/>
<name>RBL_GEUBO</name>